<gene>
    <name type="primary">Ddx41</name>
</gene>
<keyword id="KW-0007">Acetylation</keyword>
<keyword id="KW-0067">ATP-binding</keyword>
<keyword id="KW-0963">Cytoplasm</keyword>
<keyword id="KW-0347">Helicase</keyword>
<keyword id="KW-0378">Hydrolase</keyword>
<keyword id="KW-1017">Isopeptide bond</keyword>
<keyword id="KW-0479">Metal-binding</keyword>
<keyword id="KW-0507">mRNA processing</keyword>
<keyword id="KW-0508">mRNA splicing</keyword>
<keyword id="KW-0547">Nucleotide-binding</keyword>
<keyword id="KW-0539">Nucleus</keyword>
<keyword id="KW-0597">Phosphoprotein</keyword>
<keyword id="KW-1185">Reference proteome</keyword>
<keyword id="KW-0694">RNA-binding</keyword>
<keyword id="KW-0747">Spliceosome</keyword>
<keyword id="KW-0832">Ubl conjugation</keyword>
<keyword id="KW-0862">Zinc</keyword>
<keyword id="KW-0863">Zinc-finger</keyword>
<dbReference type="EC" id="3.6.4.13"/>
<dbReference type="EMBL" id="AK156957">
    <property type="protein sequence ID" value="BAE33914.1"/>
    <property type="molecule type" value="mRNA"/>
</dbReference>
<dbReference type="EMBL" id="BC011308">
    <property type="protein sequence ID" value="AAH11308.1"/>
    <property type="molecule type" value="mRNA"/>
</dbReference>
<dbReference type="CCDS" id="CCDS26549.1"/>
<dbReference type="RefSeq" id="NP_598820.2">
    <property type="nucleotide sequence ID" value="NM_134059.2"/>
</dbReference>
<dbReference type="SMR" id="Q91VN6"/>
<dbReference type="BioGRID" id="215656">
    <property type="interactions" value="19"/>
</dbReference>
<dbReference type="FunCoup" id="Q91VN6">
    <property type="interactions" value="4280"/>
</dbReference>
<dbReference type="IntAct" id="Q91VN6">
    <property type="interactions" value="7"/>
</dbReference>
<dbReference type="MINT" id="Q91VN6"/>
<dbReference type="STRING" id="10090.ENSMUSP00000021956"/>
<dbReference type="iPTMnet" id="Q91VN6"/>
<dbReference type="PhosphoSitePlus" id="Q91VN6"/>
<dbReference type="jPOST" id="Q91VN6"/>
<dbReference type="PaxDb" id="10090-ENSMUSP00000021956"/>
<dbReference type="PeptideAtlas" id="Q91VN6"/>
<dbReference type="ProteomicsDB" id="279327"/>
<dbReference type="Pumba" id="Q91VN6"/>
<dbReference type="Antibodypedia" id="17469">
    <property type="antibodies" value="299 antibodies from 30 providers"/>
</dbReference>
<dbReference type="DNASU" id="72935"/>
<dbReference type="Ensembl" id="ENSMUST00000021956.9">
    <property type="protein sequence ID" value="ENSMUSP00000021956.9"/>
    <property type="gene ID" value="ENSMUSG00000021494.10"/>
</dbReference>
<dbReference type="GeneID" id="72935"/>
<dbReference type="KEGG" id="mmu:72935"/>
<dbReference type="UCSC" id="uc007qro.2">
    <property type="organism name" value="mouse"/>
</dbReference>
<dbReference type="AGR" id="MGI:1920185"/>
<dbReference type="CTD" id="51428"/>
<dbReference type="MGI" id="MGI:1920185">
    <property type="gene designation" value="Ddx41"/>
</dbReference>
<dbReference type="VEuPathDB" id="HostDB:ENSMUSG00000021494"/>
<dbReference type="eggNOG" id="KOG0341">
    <property type="taxonomic scope" value="Eukaryota"/>
</dbReference>
<dbReference type="GeneTree" id="ENSGT00940000156333"/>
<dbReference type="HOGENOM" id="CLU_003041_16_5_1"/>
<dbReference type="InParanoid" id="Q91VN6"/>
<dbReference type="OrthoDB" id="49956at9989"/>
<dbReference type="PhylomeDB" id="Q91VN6"/>
<dbReference type="TreeFam" id="TF300340"/>
<dbReference type="Reactome" id="R-MMU-1834941">
    <property type="pathway name" value="STING mediated induction of host immune responses"/>
</dbReference>
<dbReference type="Reactome" id="R-MMU-3134975">
    <property type="pathway name" value="Regulation of innate immune responses to cytosolic DNA"/>
</dbReference>
<dbReference type="Reactome" id="R-MMU-72163">
    <property type="pathway name" value="mRNA Splicing - Major Pathway"/>
</dbReference>
<dbReference type="BioGRID-ORCS" id="72935">
    <property type="hits" value="30 hits in 82 CRISPR screens"/>
</dbReference>
<dbReference type="ChiTaRS" id="Ddx41">
    <property type="organism name" value="mouse"/>
</dbReference>
<dbReference type="PRO" id="PR:Q91VN6"/>
<dbReference type="Proteomes" id="UP000000589">
    <property type="component" value="Chromosome 13"/>
</dbReference>
<dbReference type="RNAct" id="Q91VN6">
    <property type="molecule type" value="protein"/>
</dbReference>
<dbReference type="Bgee" id="ENSMUSG00000021494">
    <property type="expression patterns" value="Expressed in ectoplacental cone and 216 other cell types or tissues"/>
</dbReference>
<dbReference type="ExpressionAtlas" id="Q91VN6">
    <property type="expression patterns" value="baseline and differential"/>
</dbReference>
<dbReference type="GO" id="GO:0071013">
    <property type="term" value="C:catalytic step 2 spliceosome"/>
    <property type="evidence" value="ECO:0007669"/>
    <property type="project" value="Ensembl"/>
</dbReference>
<dbReference type="GO" id="GO:0005829">
    <property type="term" value="C:cytosol"/>
    <property type="evidence" value="ECO:0007669"/>
    <property type="project" value="Ensembl"/>
</dbReference>
<dbReference type="GO" id="GO:0005783">
    <property type="term" value="C:endoplasmic reticulum"/>
    <property type="evidence" value="ECO:0000314"/>
    <property type="project" value="MGI"/>
</dbReference>
<dbReference type="GO" id="GO:0005634">
    <property type="term" value="C:nucleus"/>
    <property type="evidence" value="ECO:0000314"/>
    <property type="project" value="MGI"/>
</dbReference>
<dbReference type="GO" id="GO:0005524">
    <property type="term" value="F:ATP binding"/>
    <property type="evidence" value="ECO:0007669"/>
    <property type="project" value="UniProtKB-KW"/>
</dbReference>
<dbReference type="GO" id="GO:0016887">
    <property type="term" value="F:ATP hydrolysis activity"/>
    <property type="evidence" value="ECO:0007669"/>
    <property type="project" value="RHEA"/>
</dbReference>
<dbReference type="GO" id="GO:0003677">
    <property type="term" value="F:DNA binding"/>
    <property type="evidence" value="ECO:0000314"/>
    <property type="project" value="MGI"/>
</dbReference>
<dbReference type="GO" id="GO:0003723">
    <property type="term" value="F:RNA binding"/>
    <property type="evidence" value="ECO:0007669"/>
    <property type="project" value="UniProtKB-KW"/>
</dbReference>
<dbReference type="GO" id="GO:0003724">
    <property type="term" value="F:RNA helicase activity"/>
    <property type="evidence" value="ECO:0007669"/>
    <property type="project" value="UniProtKB-EC"/>
</dbReference>
<dbReference type="GO" id="GO:0008270">
    <property type="term" value="F:zinc ion binding"/>
    <property type="evidence" value="ECO:0007669"/>
    <property type="project" value="UniProtKB-KW"/>
</dbReference>
<dbReference type="GO" id="GO:0030154">
    <property type="term" value="P:cell differentiation"/>
    <property type="evidence" value="ECO:0000250"/>
    <property type="project" value="UniProtKB"/>
</dbReference>
<dbReference type="GO" id="GO:0008283">
    <property type="term" value="P:cell population proliferation"/>
    <property type="evidence" value="ECO:0000250"/>
    <property type="project" value="UniProtKB"/>
</dbReference>
<dbReference type="GO" id="GO:0035458">
    <property type="term" value="P:cellular response to interferon-beta"/>
    <property type="evidence" value="ECO:0000315"/>
    <property type="project" value="MGI"/>
</dbReference>
<dbReference type="GO" id="GO:0140896">
    <property type="term" value="P:cGAS/STING signaling pathway"/>
    <property type="evidence" value="ECO:0007669"/>
    <property type="project" value="Ensembl"/>
</dbReference>
<dbReference type="GO" id="GO:0051607">
    <property type="term" value="P:defense response to virus"/>
    <property type="evidence" value="ECO:0000315"/>
    <property type="project" value="MGI"/>
</dbReference>
<dbReference type="GO" id="GO:0000398">
    <property type="term" value="P:mRNA splicing, via spliceosome"/>
    <property type="evidence" value="ECO:0000250"/>
    <property type="project" value="UniProtKB"/>
</dbReference>
<dbReference type="GO" id="GO:0045944">
    <property type="term" value="P:positive regulation of transcription by RNA polymerase II"/>
    <property type="evidence" value="ECO:0000314"/>
    <property type="project" value="MGI"/>
</dbReference>
<dbReference type="CDD" id="cd17951">
    <property type="entry name" value="DEADc_DDX41"/>
    <property type="match status" value="1"/>
</dbReference>
<dbReference type="CDD" id="cd18787">
    <property type="entry name" value="SF2_C_DEAD"/>
    <property type="match status" value="1"/>
</dbReference>
<dbReference type="FunFam" id="3.40.50.300:FF:000449">
    <property type="entry name" value="Probable ATP-dependent RNA helicase DDX41"/>
    <property type="match status" value="1"/>
</dbReference>
<dbReference type="FunFam" id="3.40.50.300:FF:000657">
    <property type="entry name" value="Probable ATP-dependent RNA helicase DDX41"/>
    <property type="match status" value="1"/>
</dbReference>
<dbReference type="Gene3D" id="3.40.50.300">
    <property type="entry name" value="P-loop containing nucleotide triphosphate hydrolases"/>
    <property type="match status" value="2"/>
</dbReference>
<dbReference type="InterPro" id="IPR011545">
    <property type="entry name" value="DEAD/DEAH_box_helicase_dom"/>
</dbReference>
<dbReference type="InterPro" id="IPR044113">
    <property type="entry name" value="DEADc_DDX41"/>
</dbReference>
<dbReference type="InterPro" id="IPR014001">
    <property type="entry name" value="Helicase_ATP-bd"/>
</dbReference>
<dbReference type="InterPro" id="IPR001650">
    <property type="entry name" value="Helicase_C-like"/>
</dbReference>
<dbReference type="InterPro" id="IPR027417">
    <property type="entry name" value="P-loop_NTPase"/>
</dbReference>
<dbReference type="InterPro" id="IPR014014">
    <property type="entry name" value="RNA_helicase_DEAD_Q_motif"/>
</dbReference>
<dbReference type="PANTHER" id="PTHR47958">
    <property type="entry name" value="ATP-DEPENDENT RNA HELICASE DBP3"/>
    <property type="match status" value="1"/>
</dbReference>
<dbReference type="Pfam" id="PF00270">
    <property type="entry name" value="DEAD"/>
    <property type="match status" value="1"/>
</dbReference>
<dbReference type="Pfam" id="PF00271">
    <property type="entry name" value="Helicase_C"/>
    <property type="match status" value="1"/>
</dbReference>
<dbReference type="SMART" id="SM00487">
    <property type="entry name" value="DEXDc"/>
    <property type="match status" value="1"/>
</dbReference>
<dbReference type="SMART" id="SM00490">
    <property type="entry name" value="HELICc"/>
    <property type="match status" value="1"/>
</dbReference>
<dbReference type="SUPFAM" id="SSF52540">
    <property type="entry name" value="P-loop containing nucleoside triphosphate hydrolases"/>
    <property type="match status" value="2"/>
</dbReference>
<dbReference type="PROSITE" id="PS51192">
    <property type="entry name" value="HELICASE_ATP_BIND_1"/>
    <property type="match status" value="1"/>
</dbReference>
<dbReference type="PROSITE" id="PS51194">
    <property type="entry name" value="HELICASE_CTER"/>
    <property type="match status" value="1"/>
</dbReference>
<dbReference type="PROSITE" id="PS51195">
    <property type="entry name" value="Q_MOTIF"/>
    <property type="match status" value="1"/>
</dbReference>
<protein>
    <recommendedName>
        <fullName>Probable ATP-dependent RNA helicase DDX41</fullName>
        <ecNumber>3.6.4.13</ecNumber>
    </recommendedName>
    <alternativeName>
        <fullName>DEAD box protein 41</fullName>
    </alternativeName>
</protein>
<comment type="function">
    <text evidence="1 6 7 8">Multifunctional protein that participates in many aspects of cellular RNA metabolism. Plays pivotal roles in innate immune sensing and hematopoietic homeostasis (PubMed:35303436). Recognizes foreign or self-nucleic acids generated during microbial infection, thereby initiating anti-pathogen responses. Mechanistically, phosphorylation by BTK allows binding to dsDNA leading to interaction with STING1. Modulates the homeostasis of dsDNA through its ATP-dependent DNA-unwinding activity and ATP-independent strand-annealing activity. In turn, induces STING1-mediated type I interferon and cytokine responses to DNA and DNA viruses (PubMed:21892174). During murine leukemia virus infection, primarily senses the DNA/RNA hybrid generated at the first step of reverse transcription, while cGAS recognizes dsDNA generated at the next step and both are needed for the antiretroviral innate immune response (PubMed:29871919). Selectively modulates the transcription of certain immunity-associated genes by regulating their alternative splicing. Binds to RNA (R)-loops, structures consisting of DNA/RNA hybrids and a displaced strand of DNA that occur during transcription, and prevents their accumulation, thereby maintaining genome stability. Also participates in pre-mRNA splicing, translational regulation and snoRNA processing, which is essential for ribosome biogenesis.</text>
</comment>
<comment type="catalytic activity">
    <reaction evidence="1">
        <text>ATP + H2O = ADP + phosphate + H(+)</text>
        <dbReference type="Rhea" id="RHEA:13065"/>
        <dbReference type="ChEBI" id="CHEBI:15377"/>
        <dbReference type="ChEBI" id="CHEBI:15378"/>
        <dbReference type="ChEBI" id="CHEBI:30616"/>
        <dbReference type="ChEBI" id="CHEBI:43474"/>
        <dbReference type="ChEBI" id="CHEBI:456216"/>
        <dbReference type="EC" id="3.6.4.13"/>
    </reaction>
</comment>
<comment type="subunit">
    <text evidence="1">Identified in the spliceosome C complex. Interacts with ERCC6. Interacts with FAM50A. Interacts with STING1. Interacts with CGAS. Interacts with several spliceosomes components such as PRP19 or CDC5L.</text>
</comment>
<comment type="interaction">
    <interactant intactId="EBI-2551902">
        <id>Q91VN6</id>
    </interactant>
    <interactant intactId="EBI-3862093">
        <id>Q3TBT3</id>
        <label>Sting1</label>
    </interactant>
    <organismsDiffer>false</organismsDiffer>
    <experiments>4</experiments>
</comment>
<comment type="interaction">
    <interactant intactId="EBI-2551902">
        <id>Q91VN6</id>
    </interactant>
    <interactant intactId="EBI-6840982">
        <id>Q62191</id>
        <label>Trim21</label>
    </interactant>
    <organismsDiffer>false</organismsDiffer>
    <experiments>6</experiments>
</comment>
<comment type="subcellular location">
    <subcellularLocation>
        <location evidence="1">Nucleus</location>
    </subcellularLocation>
    <subcellularLocation>
        <location evidence="1">Cytoplasm</location>
    </subcellularLocation>
    <text evidence="1">Predominantly present in the nucleus and traffics to the cytoplasm, specifically in the perinuclear region, after DNA stimulation.</text>
</comment>
<comment type="PTM">
    <text evidence="1">Acetylation at Lys-9 regulates the nuclear/cytoplasmic localization.</text>
</comment>
<comment type="PTM">
    <text evidence="1">Phosphorylated by BTK; phosphorylation induces binding to dsDNA and STING1.</text>
</comment>
<comment type="PTM">
    <text evidence="1">'Lys-48'-linked ubiquitinated and degraded by TRIM21 leading to negative regulation of the innate immune response to intracellular dsDNA.</text>
</comment>
<comment type="disruption phenotype">
    <text evidence="8">Ddx41 knockout mice fail to survive postnatally. No knockout mice survive past postnatal day 17. By postnatal day 5, the major organs of KO mice, in particular, the spleen, are greatly reduced in size, and there are fewer erythroblasts and erythrocytes in the liver, spleen, and bone marrow (BM). Peripheral blood smears indicated anemia and complete blood cell count (CBC) analysis show decreased leukocytes, erythrocytes, and platelets in postnatal day 3 KO mice.</text>
</comment>
<comment type="similarity">
    <text evidence="9">Belongs to the DEAD box helicase family. DDX41 subfamily.</text>
</comment>
<proteinExistence type="evidence at protein level"/>
<name>DDX41_MOUSE</name>
<reference key="1">
    <citation type="journal article" date="2005" name="Science">
        <title>The transcriptional landscape of the mammalian genome.</title>
        <authorList>
            <person name="Carninci P."/>
            <person name="Kasukawa T."/>
            <person name="Katayama S."/>
            <person name="Gough J."/>
            <person name="Frith M.C."/>
            <person name="Maeda N."/>
            <person name="Oyama R."/>
            <person name="Ravasi T."/>
            <person name="Lenhard B."/>
            <person name="Wells C."/>
            <person name="Kodzius R."/>
            <person name="Shimokawa K."/>
            <person name="Bajic V.B."/>
            <person name="Brenner S.E."/>
            <person name="Batalov S."/>
            <person name="Forrest A.R."/>
            <person name="Zavolan M."/>
            <person name="Davis M.J."/>
            <person name="Wilming L.G."/>
            <person name="Aidinis V."/>
            <person name="Allen J.E."/>
            <person name="Ambesi-Impiombato A."/>
            <person name="Apweiler R."/>
            <person name="Aturaliya R.N."/>
            <person name="Bailey T.L."/>
            <person name="Bansal M."/>
            <person name="Baxter L."/>
            <person name="Beisel K.W."/>
            <person name="Bersano T."/>
            <person name="Bono H."/>
            <person name="Chalk A.M."/>
            <person name="Chiu K.P."/>
            <person name="Choudhary V."/>
            <person name="Christoffels A."/>
            <person name="Clutterbuck D.R."/>
            <person name="Crowe M.L."/>
            <person name="Dalla E."/>
            <person name="Dalrymple B.P."/>
            <person name="de Bono B."/>
            <person name="Della Gatta G."/>
            <person name="di Bernardo D."/>
            <person name="Down T."/>
            <person name="Engstrom P."/>
            <person name="Fagiolini M."/>
            <person name="Faulkner G."/>
            <person name="Fletcher C.F."/>
            <person name="Fukushima T."/>
            <person name="Furuno M."/>
            <person name="Futaki S."/>
            <person name="Gariboldi M."/>
            <person name="Georgii-Hemming P."/>
            <person name="Gingeras T.R."/>
            <person name="Gojobori T."/>
            <person name="Green R.E."/>
            <person name="Gustincich S."/>
            <person name="Harbers M."/>
            <person name="Hayashi Y."/>
            <person name="Hensch T.K."/>
            <person name="Hirokawa N."/>
            <person name="Hill D."/>
            <person name="Huminiecki L."/>
            <person name="Iacono M."/>
            <person name="Ikeo K."/>
            <person name="Iwama A."/>
            <person name="Ishikawa T."/>
            <person name="Jakt M."/>
            <person name="Kanapin A."/>
            <person name="Katoh M."/>
            <person name="Kawasawa Y."/>
            <person name="Kelso J."/>
            <person name="Kitamura H."/>
            <person name="Kitano H."/>
            <person name="Kollias G."/>
            <person name="Krishnan S.P."/>
            <person name="Kruger A."/>
            <person name="Kummerfeld S.K."/>
            <person name="Kurochkin I.V."/>
            <person name="Lareau L.F."/>
            <person name="Lazarevic D."/>
            <person name="Lipovich L."/>
            <person name="Liu J."/>
            <person name="Liuni S."/>
            <person name="McWilliam S."/>
            <person name="Madan Babu M."/>
            <person name="Madera M."/>
            <person name="Marchionni L."/>
            <person name="Matsuda H."/>
            <person name="Matsuzawa S."/>
            <person name="Miki H."/>
            <person name="Mignone F."/>
            <person name="Miyake S."/>
            <person name="Morris K."/>
            <person name="Mottagui-Tabar S."/>
            <person name="Mulder N."/>
            <person name="Nakano N."/>
            <person name="Nakauchi H."/>
            <person name="Ng P."/>
            <person name="Nilsson R."/>
            <person name="Nishiguchi S."/>
            <person name="Nishikawa S."/>
            <person name="Nori F."/>
            <person name="Ohara O."/>
            <person name="Okazaki Y."/>
            <person name="Orlando V."/>
            <person name="Pang K.C."/>
            <person name="Pavan W.J."/>
            <person name="Pavesi G."/>
            <person name="Pesole G."/>
            <person name="Petrovsky N."/>
            <person name="Piazza S."/>
            <person name="Reed J."/>
            <person name="Reid J.F."/>
            <person name="Ring B.Z."/>
            <person name="Ringwald M."/>
            <person name="Rost B."/>
            <person name="Ruan Y."/>
            <person name="Salzberg S.L."/>
            <person name="Sandelin A."/>
            <person name="Schneider C."/>
            <person name="Schoenbach C."/>
            <person name="Sekiguchi K."/>
            <person name="Semple C.A."/>
            <person name="Seno S."/>
            <person name="Sessa L."/>
            <person name="Sheng Y."/>
            <person name="Shibata Y."/>
            <person name="Shimada H."/>
            <person name="Shimada K."/>
            <person name="Silva D."/>
            <person name="Sinclair B."/>
            <person name="Sperling S."/>
            <person name="Stupka E."/>
            <person name="Sugiura K."/>
            <person name="Sultana R."/>
            <person name="Takenaka Y."/>
            <person name="Taki K."/>
            <person name="Tammoja K."/>
            <person name="Tan S.L."/>
            <person name="Tang S."/>
            <person name="Taylor M.S."/>
            <person name="Tegner J."/>
            <person name="Teichmann S.A."/>
            <person name="Ueda H.R."/>
            <person name="van Nimwegen E."/>
            <person name="Verardo R."/>
            <person name="Wei C.L."/>
            <person name="Yagi K."/>
            <person name="Yamanishi H."/>
            <person name="Zabarovsky E."/>
            <person name="Zhu S."/>
            <person name="Zimmer A."/>
            <person name="Hide W."/>
            <person name="Bult C."/>
            <person name="Grimmond S.M."/>
            <person name="Teasdale R.D."/>
            <person name="Liu E.T."/>
            <person name="Brusic V."/>
            <person name="Quackenbush J."/>
            <person name="Wahlestedt C."/>
            <person name="Mattick J.S."/>
            <person name="Hume D.A."/>
            <person name="Kai C."/>
            <person name="Sasaki D."/>
            <person name="Tomaru Y."/>
            <person name="Fukuda S."/>
            <person name="Kanamori-Katayama M."/>
            <person name="Suzuki M."/>
            <person name="Aoki J."/>
            <person name="Arakawa T."/>
            <person name="Iida J."/>
            <person name="Imamura K."/>
            <person name="Itoh M."/>
            <person name="Kato T."/>
            <person name="Kawaji H."/>
            <person name="Kawagashira N."/>
            <person name="Kawashima T."/>
            <person name="Kojima M."/>
            <person name="Kondo S."/>
            <person name="Konno H."/>
            <person name="Nakano K."/>
            <person name="Ninomiya N."/>
            <person name="Nishio T."/>
            <person name="Okada M."/>
            <person name="Plessy C."/>
            <person name="Shibata K."/>
            <person name="Shiraki T."/>
            <person name="Suzuki S."/>
            <person name="Tagami M."/>
            <person name="Waki K."/>
            <person name="Watahiki A."/>
            <person name="Okamura-Oho Y."/>
            <person name="Suzuki H."/>
            <person name="Kawai J."/>
            <person name="Hayashizaki Y."/>
        </authorList>
    </citation>
    <scope>NUCLEOTIDE SEQUENCE [LARGE SCALE MRNA]</scope>
    <source>
        <strain>NOD</strain>
        <tissue>Spleen</tissue>
    </source>
</reference>
<reference key="2">
    <citation type="journal article" date="2004" name="Genome Res.">
        <title>The status, quality, and expansion of the NIH full-length cDNA project: the Mammalian Gene Collection (MGC).</title>
        <authorList>
            <consortium name="The MGC Project Team"/>
        </authorList>
    </citation>
    <scope>NUCLEOTIDE SEQUENCE [LARGE SCALE MRNA]</scope>
    <source>
        <strain>NMRI</strain>
        <tissue>Mammary tumor</tissue>
    </source>
</reference>
<reference key="3">
    <citation type="journal article" date="2007" name="Proc. Natl. Acad. Sci. U.S.A.">
        <title>Large-scale phosphorylation analysis of mouse liver.</title>
        <authorList>
            <person name="Villen J."/>
            <person name="Beausoleil S.A."/>
            <person name="Gerber S.A."/>
            <person name="Gygi S.P."/>
        </authorList>
    </citation>
    <scope>PHOSPHORYLATION [LARGE SCALE ANALYSIS] AT SER-21</scope>
    <scope>IDENTIFICATION BY MASS SPECTROMETRY [LARGE SCALE ANALYSIS]</scope>
    <source>
        <tissue>Liver</tissue>
    </source>
</reference>
<reference key="4">
    <citation type="journal article" date="2010" name="Cell">
        <title>A tissue-specific atlas of mouse protein phosphorylation and expression.</title>
        <authorList>
            <person name="Huttlin E.L."/>
            <person name="Jedrychowski M.P."/>
            <person name="Elias J.E."/>
            <person name="Goswami T."/>
            <person name="Rad R."/>
            <person name="Beausoleil S.A."/>
            <person name="Villen J."/>
            <person name="Haas W."/>
            <person name="Sowa M.E."/>
            <person name="Gygi S.P."/>
        </authorList>
    </citation>
    <scope>PHOSPHORYLATION [LARGE SCALE ANALYSIS] AT SER-21; SER-23 AND TYR-33</scope>
    <scope>IDENTIFICATION BY MASS SPECTROMETRY [LARGE SCALE ANALYSIS]</scope>
    <source>
        <tissue>Brain</tissue>
        <tissue>Brown adipose tissue</tissue>
        <tissue>Kidney</tissue>
        <tissue>Liver</tissue>
        <tissue>Lung</tissue>
        <tissue>Pancreas</tissue>
        <tissue>Spleen</tissue>
        <tissue>Testis</tissue>
    </source>
</reference>
<reference key="5">
    <citation type="journal article" date="2011" name="Nat. Immunol.">
        <title>The helicase DDX41 senses intracellular DNA mediated by the adaptor STING in dendritic cells.</title>
        <authorList>
            <person name="Zhang Z."/>
            <person name="Yuan B."/>
            <person name="Bao M."/>
            <person name="Lu N."/>
            <person name="Kim T."/>
            <person name="Liu Y.J."/>
        </authorList>
    </citation>
    <scope>FUNCTION</scope>
    <scope>INTERACTION WITH STING1</scope>
    <scope>SUBCELLULAR LOCATION</scope>
</reference>
<reference key="6">
    <citation type="journal article" date="2018" name="MBio">
        <title>DDX41 Recognizes RNA/DNA Retroviral Reverse Transcripts and Is Critical for In Vivo Control of Murine Leukemia Virus Infection.</title>
        <authorList>
            <person name="Stavrou S."/>
            <person name="Aguilera A.N."/>
            <person name="Blouch K."/>
            <person name="Ross S.R."/>
        </authorList>
    </citation>
    <scope>FUNCTION</scope>
</reference>
<reference key="7">
    <citation type="journal article" date="2022" name="Stem Cell Reports">
        <title>DDX41 is needed for pre- and postnatal hematopoietic stem cell differentiation in mice.</title>
        <authorList>
            <person name="Ma J."/>
            <person name="Mahmud N."/>
            <person name="Bosland M.C."/>
            <person name="Ross S.R."/>
        </authorList>
    </citation>
    <scope>FUNCTION</scope>
    <scope>DISRUPTION PHENOTYPE</scope>
</reference>
<accession>Q91VN6</accession>
<accession>Q3U0E0</accession>
<sequence>MEDSEPERKRARADEATAGGSRSEDEDEDDEDYVPYVPLRQRRQLLLQKLLQRRRKGATEEEQQDSGSEPRGDEDDIPLGPQSNVSLLDQHQHLKEKAEARKESAKEKQLKEEEKILESVAEGRALMSVKEMAKGITYDDPIKTSWTPPRYVLSMSEERHERVRKKYHILVEGDGIPPPIKSFKEMKFPAAILRGLKKKGILHPTPIQIQGIPTILSGRDMIGIAFTGSGKTLVFTLPVIMFCLEQEKRLPFSKREGPYGLIICPSRELARQTHGILEYYCRLLQEDSSPLLRCALCIGGMSVKEQMETIRHGVHMMVATPGRLMDLLQKKMVSLDICRYLALDEADRMIDMGFEGDIRTIFSYFKGQRQTLLFSATMPKKIQNFAKSALVKPVTINVGRAGAASLDVIQEVEYVKEEAKMVYLLECLQKTPPPVLIFAEKKADVDAIHEYLLLKGVEAVAIHGGKDQEERTKAIEAFREGKKDVLVATDVASKGLDFPAIQHVINYDMPEEIENYVHRIGRTGRSGNTGIATTFINKACDESVLMDLKALLLEAKQKVPPVLQVLHCGDESMLDIGGERGCAFCGGLGHRITDCPKLEAMQTKQVSNIGRKDYLAHSSMDF</sequence>
<evidence type="ECO:0000250" key="1">
    <source>
        <dbReference type="UniProtKB" id="Q9UJV9"/>
    </source>
</evidence>
<evidence type="ECO:0000255" key="2">
    <source>
        <dbReference type="PROSITE-ProRule" id="PRU00541"/>
    </source>
</evidence>
<evidence type="ECO:0000255" key="3">
    <source>
        <dbReference type="PROSITE-ProRule" id="PRU00542"/>
    </source>
</evidence>
<evidence type="ECO:0000255" key="4">
    <source>
        <dbReference type="PROSITE-ProRule" id="PRU00552"/>
    </source>
</evidence>
<evidence type="ECO:0000256" key="5">
    <source>
        <dbReference type="SAM" id="MobiDB-lite"/>
    </source>
</evidence>
<evidence type="ECO:0000269" key="6">
    <source>
    </source>
</evidence>
<evidence type="ECO:0000269" key="7">
    <source>
    </source>
</evidence>
<evidence type="ECO:0000269" key="8">
    <source>
    </source>
</evidence>
<evidence type="ECO:0000305" key="9"/>
<evidence type="ECO:0007744" key="10">
    <source>
    </source>
</evidence>
<evidence type="ECO:0007744" key="11">
    <source>
    </source>
</evidence>
<organism>
    <name type="scientific">Mus musculus</name>
    <name type="common">Mouse</name>
    <dbReference type="NCBI Taxonomy" id="10090"/>
    <lineage>
        <taxon>Eukaryota</taxon>
        <taxon>Metazoa</taxon>
        <taxon>Chordata</taxon>
        <taxon>Craniata</taxon>
        <taxon>Vertebrata</taxon>
        <taxon>Euteleostomi</taxon>
        <taxon>Mammalia</taxon>
        <taxon>Eutheria</taxon>
        <taxon>Euarchontoglires</taxon>
        <taxon>Glires</taxon>
        <taxon>Rodentia</taxon>
        <taxon>Myomorpha</taxon>
        <taxon>Muroidea</taxon>
        <taxon>Muridae</taxon>
        <taxon>Murinae</taxon>
        <taxon>Mus</taxon>
        <taxon>Mus</taxon>
    </lineage>
</organism>
<feature type="chain" id="PRO_0000054971" description="Probable ATP-dependent RNA helicase DDX41">
    <location>
        <begin position="1"/>
        <end position="622"/>
    </location>
</feature>
<feature type="domain" description="Helicase ATP-binding" evidence="2">
    <location>
        <begin position="212"/>
        <end position="396"/>
    </location>
</feature>
<feature type="domain" description="Helicase C-terminal" evidence="3">
    <location>
        <begin position="407"/>
        <end position="567"/>
    </location>
</feature>
<feature type="zinc finger region" description="CCHC-type">
    <location>
        <begin position="580"/>
        <end position="597"/>
    </location>
</feature>
<feature type="region of interest" description="Disordered" evidence="5">
    <location>
        <begin position="1"/>
        <end position="39"/>
    </location>
</feature>
<feature type="region of interest" description="Disordered" evidence="5">
    <location>
        <begin position="51"/>
        <end position="84"/>
    </location>
</feature>
<feature type="short sequence motif" description="Q motif" evidence="4">
    <location>
        <begin position="181"/>
        <end position="209"/>
    </location>
</feature>
<feature type="short sequence motif" description="DEAD box" evidence="2">
    <location>
        <begin position="344"/>
        <end position="347"/>
    </location>
</feature>
<feature type="compositionally biased region" description="Basic and acidic residues" evidence="5">
    <location>
        <begin position="1"/>
        <end position="15"/>
    </location>
</feature>
<feature type="compositionally biased region" description="Acidic residues" evidence="5">
    <location>
        <begin position="24"/>
        <end position="33"/>
    </location>
</feature>
<feature type="binding site" evidence="2">
    <location>
        <begin position="225"/>
        <end position="232"/>
    </location>
    <ligand>
        <name>ATP</name>
        <dbReference type="ChEBI" id="CHEBI:30616"/>
    </ligand>
</feature>
<feature type="modified residue" description="Phosphoserine" evidence="1">
    <location>
        <position position="4"/>
    </location>
</feature>
<feature type="modified residue" description="N6-acetyllysine" evidence="1">
    <location>
        <position position="9"/>
    </location>
</feature>
<feature type="modified residue" description="Phosphoserine" evidence="10 11">
    <location>
        <position position="21"/>
    </location>
</feature>
<feature type="modified residue" description="Phosphoserine" evidence="11">
    <location>
        <position position="23"/>
    </location>
</feature>
<feature type="modified residue" description="Phosphotyrosine" evidence="11">
    <location>
        <position position="33"/>
    </location>
</feature>
<feature type="modified residue" description="Phosphotyrosine" evidence="1">
    <location>
        <position position="414"/>
    </location>
</feature>
<feature type="cross-link" description="Glycyl lysine isopeptide (Lys-Gly) (interchain with G-Cter in ubiquitin)" evidence="1">
    <location>
        <position position="9"/>
    </location>
</feature>
<feature type="cross-link" description="Glycyl lysine isopeptide (Lys-Gly) (interchain with G-Cter in ubiquitin)" evidence="1">
    <location>
        <position position="115"/>
    </location>
</feature>
<feature type="cross-link" description="Glycyl lysine isopeptide (Lys-Gly) (interchain with G-Cter in SUMO2)" evidence="1">
    <location>
        <position position="416"/>
    </location>
</feature>
<feature type="cross-link" description="Glycyl lysine isopeptide (Lys-Gly) (interchain with G-Cter in SUMO2)" evidence="1">
    <location>
        <position position="442"/>
    </location>
</feature>
<feature type="sequence conflict" description="In Ref. 2; AAH11308." evidence="9" ref="2">
    <original>V</original>
    <variation>G</variation>
    <location>
        <position position="562"/>
    </location>
</feature>